<gene>
    <name evidence="2" type="primary">pgsA</name>
    <name type="ordered locus">Z3000</name>
    <name type="ordered locus">ECs2650</name>
</gene>
<comment type="function">
    <text evidence="2">Catalyzes the conversion of cytidine diphosphate diacylglycerol (CDP-DG) and glycerol 3-phosphate into phosphatidylglycerol. Essential for the synthesis of anionic phospholipids, thereby playing a role in balancing the ratio of zwitterionic and anionic phospholipids, which is thought to be important for normal membrane function.</text>
</comment>
<comment type="catalytic activity">
    <reaction evidence="2">
        <text>a CDP-1,2-diacyl-sn-glycerol + sn-glycerol 3-phosphate = a 1,2-diacyl-sn-glycero-3-phospho-(1'-sn-glycero-3'-phosphate) + CMP + H(+)</text>
        <dbReference type="Rhea" id="RHEA:12593"/>
        <dbReference type="ChEBI" id="CHEBI:15378"/>
        <dbReference type="ChEBI" id="CHEBI:57597"/>
        <dbReference type="ChEBI" id="CHEBI:58332"/>
        <dbReference type="ChEBI" id="CHEBI:60110"/>
        <dbReference type="ChEBI" id="CHEBI:60377"/>
        <dbReference type="EC" id="2.7.8.5"/>
    </reaction>
</comment>
<comment type="pathway">
    <text evidence="2">Phospholipid metabolism; phosphatidylglycerol biosynthesis; phosphatidylglycerol from CDP-diacylglycerol: step 1/2.</text>
</comment>
<comment type="subcellular location">
    <subcellularLocation>
        <location evidence="2">Cell inner membrane</location>
        <topology evidence="2">Multi-pass membrane protein</topology>
    </subcellularLocation>
</comment>
<comment type="similarity">
    <text evidence="2">Belongs to the CDP-alcohol phosphatidyltransferase class-I family.</text>
</comment>
<feature type="initiator methionine" description="Removed" evidence="1">
    <location>
        <position position="1"/>
    </location>
</feature>
<feature type="chain" id="PRO_0000056774" description="CDP-diacylglycerol--glycerol-3-phosphate 3-phosphatidyltransferase">
    <location>
        <begin position="2"/>
        <end position="182"/>
    </location>
</feature>
<feature type="topological domain" description="Cytoplasmic" evidence="2">
    <location>
        <begin position="2"/>
        <end position="13"/>
    </location>
</feature>
<feature type="transmembrane region" description="Helical" evidence="2">
    <location>
        <begin position="14"/>
        <end position="38"/>
    </location>
</feature>
<feature type="topological domain" description="Periplasmic" evidence="2">
    <location>
        <begin position="39"/>
        <end position="61"/>
    </location>
</feature>
<feature type="transmembrane region" description="Helical" evidence="2">
    <location>
        <begin position="62"/>
        <end position="82"/>
    </location>
</feature>
<feature type="topological domain" description="Cytoplasmic" evidence="2">
    <location>
        <begin position="83"/>
        <end position="87"/>
    </location>
</feature>
<feature type="transmembrane region" description="Helical" evidence="2">
    <location>
        <begin position="88"/>
        <end position="108"/>
    </location>
</feature>
<feature type="topological domain" description="Periplasmic" evidence="2">
    <location>
        <begin position="109"/>
        <end position="146"/>
    </location>
</feature>
<feature type="transmembrane region" description="Helical" evidence="2">
    <location>
        <begin position="147"/>
        <end position="169"/>
    </location>
</feature>
<feature type="topological domain" description="Cytoplasmic" evidence="2">
    <location>
        <begin position="170"/>
        <end position="182"/>
    </location>
</feature>
<reference key="1">
    <citation type="journal article" date="2001" name="Nature">
        <title>Genome sequence of enterohaemorrhagic Escherichia coli O157:H7.</title>
        <authorList>
            <person name="Perna N.T."/>
            <person name="Plunkett G. III"/>
            <person name="Burland V."/>
            <person name="Mau B."/>
            <person name="Glasner J.D."/>
            <person name="Rose D.J."/>
            <person name="Mayhew G.F."/>
            <person name="Evans P.S."/>
            <person name="Gregor J."/>
            <person name="Kirkpatrick H.A."/>
            <person name="Posfai G."/>
            <person name="Hackett J."/>
            <person name="Klink S."/>
            <person name="Boutin A."/>
            <person name="Shao Y."/>
            <person name="Miller L."/>
            <person name="Grotbeck E.J."/>
            <person name="Davis N.W."/>
            <person name="Lim A."/>
            <person name="Dimalanta E.T."/>
            <person name="Potamousis K."/>
            <person name="Apodaca J."/>
            <person name="Anantharaman T.S."/>
            <person name="Lin J."/>
            <person name="Yen G."/>
            <person name="Schwartz D.C."/>
            <person name="Welch R.A."/>
            <person name="Blattner F.R."/>
        </authorList>
    </citation>
    <scope>NUCLEOTIDE SEQUENCE [LARGE SCALE GENOMIC DNA]</scope>
    <source>
        <strain>O157:H7 / EDL933 / ATCC 700927 / EHEC</strain>
    </source>
</reference>
<reference key="2">
    <citation type="journal article" date="2001" name="DNA Res.">
        <title>Complete genome sequence of enterohemorrhagic Escherichia coli O157:H7 and genomic comparison with a laboratory strain K-12.</title>
        <authorList>
            <person name="Hayashi T."/>
            <person name="Makino K."/>
            <person name="Ohnishi M."/>
            <person name="Kurokawa K."/>
            <person name="Ishii K."/>
            <person name="Yokoyama K."/>
            <person name="Han C.-G."/>
            <person name="Ohtsubo E."/>
            <person name="Nakayama K."/>
            <person name="Murata T."/>
            <person name="Tanaka M."/>
            <person name="Tobe T."/>
            <person name="Iida T."/>
            <person name="Takami H."/>
            <person name="Honda T."/>
            <person name="Sasakawa C."/>
            <person name="Ogasawara N."/>
            <person name="Yasunaga T."/>
            <person name="Kuhara S."/>
            <person name="Shiba T."/>
            <person name="Hattori M."/>
            <person name="Shinagawa H."/>
        </authorList>
    </citation>
    <scope>NUCLEOTIDE SEQUENCE [LARGE SCALE GENOMIC DNA]</scope>
    <source>
        <strain>O157:H7 / Sakai / RIMD 0509952 / EHEC</strain>
    </source>
</reference>
<dbReference type="EC" id="2.7.8.5" evidence="2"/>
<dbReference type="EMBL" id="AE005174">
    <property type="protein sequence ID" value="AAG56927.1"/>
    <property type="molecule type" value="Genomic_DNA"/>
</dbReference>
<dbReference type="EMBL" id="BA000007">
    <property type="protein sequence ID" value="BAB36073.1"/>
    <property type="molecule type" value="Genomic_DNA"/>
</dbReference>
<dbReference type="PIR" id="B90960">
    <property type="entry name" value="B90960"/>
</dbReference>
<dbReference type="PIR" id="C85808">
    <property type="entry name" value="C85808"/>
</dbReference>
<dbReference type="RefSeq" id="NP_310677.1">
    <property type="nucleotide sequence ID" value="NC_002695.1"/>
</dbReference>
<dbReference type="RefSeq" id="WP_001160187.1">
    <property type="nucleotide sequence ID" value="NZ_VOAI01000028.1"/>
</dbReference>
<dbReference type="SMR" id="P0ABG0"/>
<dbReference type="STRING" id="155864.Z3000"/>
<dbReference type="GeneID" id="913922"/>
<dbReference type="GeneID" id="93776217"/>
<dbReference type="KEGG" id="ece:Z3000"/>
<dbReference type="KEGG" id="ecs:ECs_2650"/>
<dbReference type="PATRIC" id="fig|386585.9.peg.2775"/>
<dbReference type="eggNOG" id="COG0558">
    <property type="taxonomic scope" value="Bacteria"/>
</dbReference>
<dbReference type="HOGENOM" id="CLU_051314_2_1_6"/>
<dbReference type="OMA" id="WSMVYYL"/>
<dbReference type="UniPathway" id="UPA00084">
    <property type="reaction ID" value="UER00503"/>
</dbReference>
<dbReference type="Proteomes" id="UP000000558">
    <property type="component" value="Chromosome"/>
</dbReference>
<dbReference type="Proteomes" id="UP000002519">
    <property type="component" value="Chromosome"/>
</dbReference>
<dbReference type="GO" id="GO:0005886">
    <property type="term" value="C:plasma membrane"/>
    <property type="evidence" value="ECO:0007669"/>
    <property type="project" value="UniProtKB-SubCell"/>
</dbReference>
<dbReference type="GO" id="GO:0008444">
    <property type="term" value="F:CDP-diacylglycerol-glycerol-3-phosphate 3-phosphatidyltransferase activity"/>
    <property type="evidence" value="ECO:0007669"/>
    <property type="project" value="UniProtKB-UniRule"/>
</dbReference>
<dbReference type="GO" id="GO:0006655">
    <property type="term" value="P:phosphatidylglycerol biosynthetic process"/>
    <property type="evidence" value="ECO:0007669"/>
    <property type="project" value="UniProtKB-UniRule"/>
</dbReference>
<dbReference type="FunFam" id="1.20.120.1760:FF:000001">
    <property type="entry name" value="CDP-diacylglycerol--glycerol-3-phosphate 3-phosphatidyltransferase"/>
    <property type="match status" value="1"/>
</dbReference>
<dbReference type="Gene3D" id="1.20.120.1760">
    <property type="match status" value="1"/>
</dbReference>
<dbReference type="HAMAP" id="MF_01437">
    <property type="entry name" value="PgsA"/>
    <property type="match status" value="1"/>
</dbReference>
<dbReference type="InterPro" id="IPR050324">
    <property type="entry name" value="CDP-alcohol_PTase-I"/>
</dbReference>
<dbReference type="InterPro" id="IPR000462">
    <property type="entry name" value="CDP-OH_P_trans"/>
</dbReference>
<dbReference type="InterPro" id="IPR043130">
    <property type="entry name" value="CDP-OH_PTrfase_TM_dom"/>
</dbReference>
<dbReference type="InterPro" id="IPR048254">
    <property type="entry name" value="CDP_ALCOHOL_P_TRANSF_CS"/>
</dbReference>
<dbReference type="InterPro" id="IPR023762">
    <property type="entry name" value="PGP_synthase_bac"/>
</dbReference>
<dbReference type="InterPro" id="IPR004570">
    <property type="entry name" value="Phosphatidylglycerol_P_synth"/>
</dbReference>
<dbReference type="NCBIfam" id="TIGR00560">
    <property type="entry name" value="pgsA"/>
    <property type="match status" value="1"/>
</dbReference>
<dbReference type="NCBIfam" id="NF008090">
    <property type="entry name" value="PRK10832.1"/>
    <property type="match status" value="1"/>
</dbReference>
<dbReference type="PANTHER" id="PTHR14269:SF62">
    <property type="entry name" value="CDP-DIACYLGLYCEROL--GLYCEROL-3-PHOSPHATE 3-PHOSPHATIDYLTRANSFERASE 1, CHLOROPLASTIC"/>
    <property type="match status" value="1"/>
</dbReference>
<dbReference type="PANTHER" id="PTHR14269">
    <property type="entry name" value="CDP-DIACYLGLYCEROL--GLYCEROL-3-PHOSPHATE 3-PHOSPHATIDYLTRANSFERASE-RELATED"/>
    <property type="match status" value="1"/>
</dbReference>
<dbReference type="Pfam" id="PF01066">
    <property type="entry name" value="CDP-OH_P_transf"/>
    <property type="match status" value="1"/>
</dbReference>
<dbReference type="PIRSF" id="PIRSF000847">
    <property type="entry name" value="Phos_ph_gly_syn"/>
    <property type="match status" value="1"/>
</dbReference>
<dbReference type="PROSITE" id="PS00379">
    <property type="entry name" value="CDP_ALCOHOL_P_TRANSF"/>
    <property type="match status" value="1"/>
</dbReference>
<organism>
    <name type="scientific">Escherichia coli O157:H7</name>
    <dbReference type="NCBI Taxonomy" id="83334"/>
    <lineage>
        <taxon>Bacteria</taxon>
        <taxon>Pseudomonadati</taxon>
        <taxon>Pseudomonadota</taxon>
        <taxon>Gammaproteobacteria</taxon>
        <taxon>Enterobacterales</taxon>
        <taxon>Enterobacteriaceae</taxon>
        <taxon>Escherichia</taxon>
    </lineage>
</organism>
<accession>P0ABG0</accession>
<accession>P06978</accession>
<proteinExistence type="inferred from homology"/>
<evidence type="ECO:0000250" key="1"/>
<evidence type="ECO:0000255" key="2">
    <source>
        <dbReference type="HAMAP-Rule" id="MF_01437"/>
    </source>
</evidence>
<protein>
    <recommendedName>
        <fullName evidence="2">CDP-diacylglycerol--glycerol-3-phosphate 3-phosphatidyltransferase</fullName>
        <ecNumber evidence="2">2.7.8.5</ecNumber>
    </recommendedName>
    <alternativeName>
        <fullName evidence="2">Phosphatidylglycerophosphate synthase</fullName>
        <shortName evidence="2">PGP synthase</shortName>
    </alternativeName>
</protein>
<name>PGSA_ECO57</name>
<keyword id="KW-0997">Cell inner membrane</keyword>
<keyword id="KW-1003">Cell membrane</keyword>
<keyword id="KW-0444">Lipid biosynthesis</keyword>
<keyword id="KW-0443">Lipid metabolism</keyword>
<keyword id="KW-0472">Membrane</keyword>
<keyword id="KW-0594">Phospholipid biosynthesis</keyword>
<keyword id="KW-1208">Phospholipid metabolism</keyword>
<keyword id="KW-1185">Reference proteome</keyword>
<keyword id="KW-0808">Transferase</keyword>
<keyword id="KW-0812">Transmembrane</keyword>
<keyword id="KW-1133">Transmembrane helix</keyword>
<sequence>MQFNIPTLLTLFRVILIPFFVLVFYLPVTWSPFAAALIFCVAAVTDWFDGFLARRWNQSTRFGAFLDPVADKVLVAIAMVLVTEHYHSWWVTLPAATMIAREIIISALREWMAELGKRSSVAVSWIGKVKTTAQMVALAWLLWRPNIWVEYAGIALFFVAAVLTLWSMLQYLSAARADLLDQ</sequence>